<name>AROK_VIBPA</name>
<keyword id="KW-0028">Amino-acid biosynthesis</keyword>
<keyword id="KW-0057">Aromatic amino acid biosynthesis</keyword>
<keyword id="KW-0067">ATP-binding</keyword>
<keyword id="KW-0963">Cytoplasm</keyword>
<keyword id="KW-0418">Kinase</keyword>
<keyword id="KW-0460">Magnesium</keyword>
<keyword id="KW-0479">Metal-binding</keyword>
<keyword id="KW-0547">Nucleotide-binding</keyword>
<keyword id="KW-0808">Transferase</keyword>
<gene>
    <name evidence="1" type="primary">aroK</name>
    <name type="ordered locus">VP2745</name>
</gene>
<organism>
    <name type="scientific">Vibrio parahaemolyticus serotype O3:K6 (strain RIMD 2210633)</name>
    <dbReference type="NCBI Taxonomy" id="223926"/>
    <lineage>
        <taxon>Bacteria</taxon>
        <taxon>Pseudomonadati</taxon>
        <taxon>Pseudomonadota</taxon>
        <taxon>Gammaproteobacteria</taxon>
        <taxon>Vibrionales</taxon>
        <taxon>Vibrionaceae</taxon>
        <taxon>Vibrio</taxon>
    </lineage>
</organism>
<comment type="function">
    <text evidence="1">Catalyzes the specific phosphorylation of the 3-hydroxyl group of shikimic acid using ATP as a cosubstrate.</text>
</comment>
<comment type="catalytic activity">
    <reaction evidence="1">
        <text>shikimate + ATP = 3-phosphoshikimate + ADP + H(+)</text>
        <dbReference type="Rhea" id="RHEA:13121"/>
        <dbReference type="ChEBI" id="CHEBI:15378"/>
        <dbReference type="ChEBI" id="CHEBI:30616"/>
        <dbReference type="ChEBI" id="CHEBI:36208"/>
        <dbReference type="ChEBI" id="CHEBI:145989"/>
        <dbReference type="ChEBI" id="CHEBI:456216"/>
        <dbReference type="EC" id="2.7.1.71"/>
    </reaction>
</comment>
<comment type="cofactor">
    <cofactor evidence="1">
        <name>Mg(2+)</name>
        <dbReference type="ChEBI" id="CHEBI:18420"/>
    </cofactor>
    <text evidence="1">Binds 1 Mg(2+) ion per subunit.</text>
</comment>
<comment type="pathway">
    <text evidence="1">Metabolic intermediate biosynthesis; chorismate biosynthesis; chorismate from D-erythrose 4-phosphate and phosphoenolpyruvate: step 5/7.</text>
</comment>
<comment type="subunit">
    <text evidence="1">Monomer.</text>
</comment>
<comment type="subcellular location">
    <subcellularLocation>
        <location evidence="1">Cytoplasm</location>
    </subcellularLocation>
</comment>
<comment type="similarity">
    <text evidence="1">Belongs to the shikimate kinase family.</text>
</comment>
<sequence length="172" mass="19472">MAEKRNIFLVGPMGAGKSTIGRHLAQQLHMEFVDSDTVIEERTGADISWVFDVEGEEGFRKREEAVLEDLTQEQGIVLATGGGSVKSKENRNRLSARGVVVYLETTIEKQLARTNRDKKRPLLQTDNPREVLEQLAEERNPLYEEVADYTVRTDDQSAKVVANQIVKMLEER</sequence>
<accession>Q87L67</accession>
<feature type="chain" id="PRO_0000192423" description="Shikimate kinase">
    <location>
        <begin position="1"/>
        <end position="172"/>
    </location>
</feature>
<feature type="binding site" evidence="1">
    <location>
        <begin position="14"/>
        <end position="19"/>
    </location>
    <ligand>
        <name>ATP</name>
        <dbReference type="ChEBI" id="CHEBI:30616"/>
    </ligand>
</feature>
<feature type="binding site" evidence="1">
    <location>
        <position position="18"/>
    </location>
    <ligand>
        <name>Mg(2+)</name>
        <dbReference type="ChEBI" id="CHEBI:18420"/>
    </ligand>
</feature>
<feature type="binding site" evidence="1">
    <location>
        <position position="36"/>
    </location>
    <ligand>
        <name>substrate</name>
    </ligand>
</feature>
<feature type="binding site" evidence="1">
    <location>
        <position position="60"/>
    </location>
    <ligand>
        <name>substrate</name>
    </ligand>
</feature>
<feature type="binding site" evidence="1">
    <location>
        <position position="82"/>
    </location>
    <ligand>
        <name>substrate</name>
    </ligand>
</feature>
<feature type="binding site" evidence="1">
    <location>
        <position position="120"/>
    </location>
    <ligand>
        <name>ATP</name>
        <dbReference type="ChEBI" id="CHEBI:30616"/>
    </ligand>
</feature>
<feature type="binding site" evidence="1">
    <location>
        <position position="139"/>
    </location>
    <ligand>
        <name>substrate</name>
    </ligand>
</feature>
<feature type="binding site" evidence="1">
    <location>
        <position position="156"/>
    </location>
    <ligand>
        <name>ATP</name>
        <dbReference type="ChEBI" id="CHEBI:30616"/>
    </ligand>
</feature>
<proteinExistence type="inferred from homology"/>
<dbReference type="EC" id="2.7.1.71" evidence="1"/>
<dbReference type="EMBL" id="BA000031">
    <property type="protein sequence ID" value="BAC61008.1"/>
    <property type="molecule type" value="Genomic_DNA"/>
</dbReference>
<dbReference type="RefSeq" id="NP_799124.1">
    <property type="nucleotide sequence ID" value="NC_004603.1"/>
</dbReference>
<dbReference type="RefSeq" id="WP_005381319.1">
    <property type="nucleotide sequence ID" value="NC_004603.1"/>
</dbReference>
<dbReference type="SMR" id="Q87L67"/>
<dbReference type="GeneID" id="75166442"/>
<dbReference type="KEGG" id="vpa:VP2745"/>
<dbReference type="PATRIC" id="fig|223926.6.peg.2642"/>
<dbReference type="eggNOG" id="COG0703">
    <property type="taxonomic scope" value="Bacteria"/>
</dbReference>
<dbReference type="HOGENOM" id="CLU_057607_2_2_6"/>
<dbReference type="UniPathway" id="UPA00053">
    <property type="reaction ID" value="UER00088"/>
</dbReference>
<dbReference type="Proteomes" id="UP000002493">
    <property type="component" value="Chromosome 1"/>
</dbReference>
<dbReference type="GO" id="GO:0005829">
    <property type="term" value="C:cytosol"/>
    <property type="evidence" value="ECO:0007669"/>
    <property type="project" value="TreeGrafter"/>
</dbReference>
<dbReference type="GO" id="GO:0005524">
    <property type="term" value="F:ATP binding"/>
    <property type="evidence" value="ECO:0007669"/>
    <property type="project" value="UniProtKB-UniRule"/>
</dbReference>
<dbReference type="GO" id="GO:0000287">
    <property type="term" value="F:magnesium ion binding"/>
    <property type="evidence" value="ECO:0007669"/>
    <property type="project" value="UniProtKB-UniRule"/>
</dbReference>
<dbReference type="GO" id="GO:0004765">
    <property type="term" value="F:shikimate kinase activity"/>
    <property type="evidence" value="ECO:0007669"/>
    <property type="project" value="UniProtKB-UniRule"/>
</dbReference>
<dbReference type="GO" id="GO:0008652">
    <property type="term" value="P:amino acid biosynthetic process"/>
    <property type="evidence" value="ECO:0007669"/>
    <property type="project" value="UniProtKB-KW"/>
</dbReference>
<dbReference type="GO" id="GO:0009073">
    <property type="term" value="P:aromatic amino acid family biosynthetic process"/>
    <property type="evidence" value="ECO:0007669"/>
    <property type="project" value="UniProtKB-KW"/>
</dbReference>
<dbReference type="GO" id="GO:0009423">
    <property type="term" value="P:chorismate biosynthetic process"/>
    <property type="evidence" value="ECO:0007669"/>
    <property type="project" value="UniProtKB-UniRule"/>
</dbReference>
<dbReference type="CDD" id="cd00464">
    <property type="entry name" value="SK"/>
    <property type="match status" value="1"/>
</dbReference>
<dbReference type="FunFam" id="3.40.50.300:FF:000099">
    <property type="entry name" value="Shikimate kinase 1"/>
    <property type="match status" value="1"/>
</dbReference>
<dbReference type="Gene3D" id="3.40.50.300">
    <property type="entry name" value="P-loop containing nucleotide triphosphate hydrolases"/>
    <property type="match status" value="1"/>
</dbReference>
<dbReference type="HAMAP" id="MF_00109">
    <property type="entry name" value="Shikimate_kinase"/>
    <property type="match status" value="1"/>
</dbReference>
<dbReference type="InterPro" id="IPR027417">
    <property type="entry name" value="P-loop_NTPase"/>
</dbReference>
<dbReference type="InterPro" id="IPR031322">
    <property type="entry name" value="Shikimate/glucono_kinase"/>
</dbReference>
<dbReference type="InterPro" id="IPR000623">
    <property type="entry name" value="Shikimate_kinase/TSH1"/>
</dbReference>
<dbReference type="InterPro" id="IPR023000">
    <property type="entry name" value="Shikimate_kinase_CS"/>
</dbReference>
<dbReference type="NCBIfam" id="NF003456">
    <property type="entry name" value="PRK05057.1"/>
    <property type="match status" value="1"/>
</dbReference>
<dbReference type="PANTHER" id="PTHR21087">
    <property type="entry name" value="SHIKIMATE KINASE"/>
    <property type="match status" value="1"/>
</dbReference>
<dbReference type="PANTHER" id="PTHR21087:SF16">
    <property type="entry name" value="SHIKIMATE KINASE 1, CHLOROPLASTIC"/>
    <property type="match status" value="1"/>
</dbReference>
<dbReference type="Pfam" id="PF01202">
    <property type="entry name" value="SKI"/>
    <property type="match status" value="1"/>
</dbReference>
<dbReference type="PRINTS" id="PR01100">
    <property type="entry name" value="SHIKIMTKNASE"/>
</dbReference>
<dbReference type="SUPFAM" id="SSF52540">
    <property type="entry name" value="P-loop containing nucleoside triphosphate hydrolases"/>
    <property type="match status" value="1"/>
</dbReference>
<dbReference type="PROSITE" id="PS01128">
    <property type="entry name" value="SHIKIMATE_KINASE"/>
    <property type="match status" value="1"/>
</dbReference>
<protein>
    <recommendedName>
        <fullName evidence="1">Shikimate kinase</fullName>
        <shortName evidence="1">SK</shortName>
        <ecNumber evidence="1">2.7.1.71</ecNumber>
    </recommendedName>
</protein>
<reference key="1">
    <citation type="journal article" date="2003" name="Lancet">
        <title>Genome sequence of Vibrio parahaemolyticus: a pathogenic mechanism distinct from that of V. cholerae.</title>
        <authorList>
            <person name="Makino K."/>
            <person name="Oshima K."/>
            <person name="Kurokawa K."/>
            <person name="Yokoyama K."/>
            <person name="Uda T."/>
            <person name="Tagomori K."/>
            <person name="Iijima Y."/>
            <person name="Najima M."/>
            <person name="Nakano M."/>
            <person name="Yamashita A."/>
            <person name="Kubota Y."/>
            <person name="Kimura S."/>
            <person name="Yasunaga T."/>
            <person name="Honda T."/>
            <person name="Shinagawa H."/>
            <person name="Hattori M."/>
            <person name="Iida T."/>
        </authorList>
    </citation>
    <scope>NUCLEOTIDE SEQUENCE [LARGE SCALE GENOMIC DNA]</scope>
    <source>
        <strain>RIMD 2210633</strain>
    </source>
</reference>
<evidence type="ECO:0000255" key="1">
    <source>
        <dbReference type="HAMAP-Rule" id="MF_00109"/>
    </source>
</evidence>